<protein>
    <recommendedName>
        <fullName>Putative ankyrin repeat protein R578</fullName>
    </recommendedName>
</protein>
<gene>
    <name type="ordered locus">MIMI_R578</name>
</gene>
<organism>
    <name type="scientific">Acanthamoeba polyphaga mimivirus</name>
    <name type="common">APMV</name>
    <dbReference type="NCBI Taxonomy" id="212035"/>
    <lineage>
        <taxon>Viruses</taxon>
        <taxon>Varidnaviria</taxon>
        <taxon>Bamfordvirae</taxon>
        <taxon>Nucleocytoviricota</taxon>
        <taxon>Megaviricetes</taxon>
        <taxon>Imitervirales</taxon>
        <taxon>Mimiviridae</taxon>
        <taxon>Megamimivirinae</taxon>
        <taxon>Mimivirus</taxon>
        <taxon>Mimivirus bradfordmassiliense</taxon>
    </lineage>
</organism>
<proteinExistence type="predicted"/>
<name>YR578_MIMIV</name>
<accession>Q5UR94</accession>
<dbReference type="EMBL" id="AY653733">
    <property type="protein sequence ID" value="AAV50841.1"/>
    <property type="molecule type" value="Genomic_DNA"/>
</dbReference>
<dbReference type="SMR" id="Q5UR94"/>
<dbReference type="KEGG" id="vg:9925214"/>
<dbReference type="Proteomes" id="UP000001134">
    <property type="component" value="Genome"/>
</dbReference>
<dbReference type="Gene3D" id="1.25.40.20">
    <property type="entry name" value="Ankyrin repeat-containing domain"/>
    <property type="match status" value="1"/>
</dbReference>
<dbReference type="InterPro" id="IPR036770">
    <property type="entry name" value="Ankyrin_rpt-contain_sf"/>
</dbReference>
<dbReference type="SUPFAM" id="SSF48403">
    <property type="entry name" value="Ankyrin repeat"/>
    <property type="match status" value="1"/>
</dbReference>
<sequence>MFSKNRNINQFQYAMESQTEFIMYIPDAINSLIHLLDNGSIIPECFKPNLTDINGFVGNLRHLPNKITSIETGLIRQVYFHGDIMIAGSVMYLKDIETLEFICKNIGFRLSLFVEWLYDNKSLHLLESIALSFPSNDVSYLLESVMQYRQNDTTKLIFNMFPSEYNKEIILRNAVITNNLEMLEFAIEKGAILSETDHLIVQSIRTSNLDLIKYIFSHIDLSKLIKLTDTVYYIYANAVYHYSHDVIVFLIESCIDYPDDLLFKLFASNQDCHETIDYIINLKYPDQNELNNILIHICRHSSQSEKYKSVYNSVEKLIELGADFTIDNYQVVIDILKSYFPNVVEIFVKNGLNPNVNPNILKTSIYCCNNFDITKYLIDNGADIHSDPSLIKTAITSGNLKTATFLMDNGAICDESDCEIITKNRHIFDNNFS</sequence>
<reference key="1">
    <citation type="journal article" date="2004" name="Science">
        <title>The 1.2-megabase genome sequence of Mimivirus.</title>
        <authorList>
            <person name="Raoult D."/>
            <person name="Audic S."/>
            <person name="Robert C."/>
            <person name="Abergel C."/>
            <person name="Renesto P."/>
            <person name="Ogata H."/>
            <person name="La Scola B."/>
            <person name="Susan M."/>
            <person name="Claverie J.-M."/>
        </authorList>
    </citation>
    <scope>NUCLEOTIDE SEQUENCE [LARGE SCALE GENOMIC DNA]</scope>
    <source>
        <strain>Rowbotham-Bradford</strain>
    </source>
</reference>
<feature type="chain" id="PRO_0000067173" description="Putative ankyrin repeat protein R578">
    <location>
        <begin position="1"/>
        <end position="433"/>
    </location>
</feature>
<feature type="repeat" description="ANK 1">
    <location>
        <begin position="166"/>
        <end position="195"/>
    </location>
</feature>
<feature type="repeat" description="ANK 2">
    <location>
        <begin position="197"/>
        <end position="224"/>
    </location>
</feature>
<feature type="repeat" description="ANK 3">
    <location>
        <begin position="356"/>
        <end position="386"/>
    </location>
</feature>
<feature type="repeat" description="ANK 4">
    <location>
        <begin position="388"/>
        <end position="415"/>
    </location>
</feature>
<keyword id="KW-0040">ANK repeat</keyword>
<keyword id="KW-1185">Reference proteome</keyword>
<keyword id="KW-0677">Repeat</keyword>
<organismHost>
    <name type="scientific">Acanthamoeba polyphaga</name>
    <name type="common">Amoeba</name>
    <dbReference type="NCBI Taxonomy" id="5757"/>
</organismHost>